<evidence type="ECO:0000255" key="1">
    <source>
        <dbReference type="HAMAP-Rule" id="MF_01475"/>
    </source>
</evidence>
<evidence type="ECO:0000256" key="2">
    <source>
        <dbReference type="SAM" id="MobiDB-lite"/>
    </source>
</evidence>
<evidence type="ECO:0000305" key="3"/>
<organism>
    <name type="scientific">Methanococcus vannielii</name>
    <dbReference type="NCBI Taxonomy" id="2187"/>
    <lineage>
        <taxon>Archaea</taxon>
        <taxon>Methanobacteriati</taxon>
        <taxon>Methanobacteriota</taxon>
        <taxon>Methanomada group</taxon>
        <taxon>Methanococci</taxon>
        <taxon>Methanococcales</taxon>
        <taxon>Methanococcaceae</taxon>
        <taxon>Methanococcus</taxon>
    </lineage>
</organism>
<name>RL19E_METVA</name>
<keyword id="KW-0687">Ribonucleoprotein</keyword>
<keyword id="KW-0689">Ribosomal protein</keyword>
<keyword id="KW-0694">RNA-binding</keyword>
<keyword id="KW-0699">rRNA-binding</keyword>
<sequence>MDVSTQRRIAAAVLDCGIDRVWVDPENLEKVKMAITKDDIRLLINDGIIVKKQEKGISSARKKEVQEQKRKGKRKGPGSRRGAKGARTPKKEKWMNTIRPLRTLLKELRENEKIERSSYRKLYRMAKGGAFRSRNHMKLYMKEHGILAE</sequence>
<reference key="1">
    <citation type="journal article" date="1989" name="J. Mol. Biol.">
        <title>Organization and structure of the Methanococcus transcriptional unit homologous to the Escherichia coli 'spectinomycin operon'. Implications for the evolutionary relationship of 70 S and 80 S ribosomes.</title>
        <authorList>
            <person name="Auer J."/>
            <person name="Spicker G."/>
            <person name="Boeck A."/>
        </authorList>
    </citation>
    <scope>NUCLEOTIDE SEQUENCE [GENOMIC DNA]</scope>
</reference>
<protein>
    <recommendedName>
        <fullName evidence="1">Large ribosomal subunit protein eL19</fullName>
    </recommendedName>
    <alternativeName>
        <fullName evidence="3">50S ribosomal protein L19e</fullName>
    </alternativeName>
    <alternativeName>
        <fullName>ORF E</fullName>
    </alternativeName>
</protein>
<gene>
    <name evidence="1" type="primary">rpl19e</name>
</gene>
<dbReference type="EMBL" id="X16720">
    <property type="protein sequence ID" value="CAA34698.1"/>
    <property type="molecule type" value="Genomic_DNA"/>
</dbReference>
<dbReference type="PIR" id="S05622">
    <property type="entry name" value="R5MXE"/>
</dbReference>
<dbReference type="SMR" id="P14024"/>
<dbReference type="OMA" id="NRVWIDP"/>
<dbReference type="GO" id="GO:0022625">
    <property type="term" value="C:cytosolic large ribosomal subunit"/>
    <property type="evidence" value="ECO:0007669"/>
    <property type="project" value="InterPro"/>
</dbReference>
<dbReference type="GO" id="GO:0070180">
    <property type="term" value="F:large ribosomal subunit rRNA binding"/>
    <property type="evidence" value="ECO:0007669"/>
    <property type="project" value="UniProtKB-UniRule"/>
</dbReference>
<dbReference type="GO" id="GO:0003735">
    <property type="term" value="F:structural constituent of ribosome"/>
    <property type="evidence" value="ECO:0007669"/>
    <property type="project" value="InterPro"/>
</dbReference>
<dbReference type="GO" id="GO:0006412">
    <property type="term" value="P:translation"/>
    <property type="evidence" value="ECO:0007669"/>
    <property type="project" value="UniProtKB-UniRule"/>
</dbReference>
<dbReference type="CDD" id="cd01418">
    <property type="entry name" value="Ribosomal_L19e_A"/>
    <property type="match status" value="1"/>
</dbReference>
<dbReference type="FunFam" id="1.10.1200.240:FF:000003">
    <property type="entry name" value="50S ribosomal protein L19e"/>
    <property type="match status" value="1"/>
</dbReference>
<dbReference type="FunFam" id="1.10.1650.10:FF:000001">
    <property type="entry name" value="Ribosomal protein L19"/>
    <property type="match status" value="1"/>
</dbReference>
<dbReference type="Gene3D" id="1.10.1200.60">
    <property type="match status" value="1"/>
</dbReference>
<dbReference type="Gene3D" id="1.10.1650.10">
    <property type="match status" value="1"/>
</dbReference>
<dbReference type="Gene3D" id="1.20.5.560">
    <property type="entry name" value="Single Heli x bin"/>
    <property type="match status" value="1"/>
</dbReference>
<dbReference type="HAMAP" id="MF_01475">
    <property type="entry name" value="Ribosomal_eL19"/>
    <property type="match status" value="1"/>
</dbReference>
<dbReference type="InterPro" id="IPR035970">
    <property type="entry name" value="60S_ribosomal_eL19_sf"/>
</dbReference>
<dbReference type="InterPro" id="IPR039547">
    <property type="entry name" value="Ribosomal_eL19"/>
</dbReference>
<dbReference type="InterPro" id="IPR033936">
    <property type="entry name" value="Ribosomal_eL19_arc"/>
</dbReference>
<dbReference type="InterPro" id="IPR023638">
    <property type="entry name" value="Ribosomal_eL19_CS"/>
</dbReference>
<dbReference type="InterPro" id="IPR000196">
    <property type="entry name" value="Ribosomal_eL19_dom"/>
</dbReference>
<dbReference type="InterPro" id="IPR015972">
    <property type="entry name" value="Ribosomal_eL19_dom1"/>
</dbReference>
<dbReference type="InterPro" id="IPR015973">
    <property type="entry name" value="Ribosomal_eL19_dom2"/>
</dbReference>
<dbReference type="InterPro" id="IPR015974">
    <property type="entry name" value="Ribosomal_eL19_dom3"/>
</dbReference>
<dbReference type="NCBIfam" id="NF006343">
    <property type="entry name" value="PRK08570.1"/>
    <property type="match status" value="1"/>
</dbReference>
<dbReference type="PANTHER" id="PTHR10722">
    <property type="entry name" value="60S RIBOSOMAL PROTEIN L19"/>
    <property type="match status" value="1"/>
</dbReference>
<dbReference type="Pfam" id="PF01280">
    <property type="entry name" value="Ribosomal_L19e"/>
    <property type="match status" value="1"/>
</dbReference>
<dbReference type="Pfam" id="PF25476">
    <property type="entry name" value="Ribosomal_L19e_C"/>
    <property type="match status" value="1"/>
</dbReference>
<dbReference type="SMART" id="SM01416">
    <property type="entry name" value="Ribosomal_L19e"/>
    <property type="match status" value="1"/>
</dbReference>
<dbReference type="SUPFAM" id="SSF48140">
    <property type="entry name" value="Ribosomal protein L19 (L19e)"/>
    <property type="match status" value="1"/>
</dbReference>
<dbReference type="PROSITE" id="PS00526">
    <property type="entry name" value="RIBOSOMAL_L19E"/>
    <property type="match status" value="1"/>
</dbReference>
<accession>P14024</accession>
<feature type="chain" id="PRO_0000131191" description="Large ribosomal subunit protein eL19">
    <location>
        <begin position="1"/>
        <end position="149"/>
    </location>
</feature>
<feature type="region of interest" description="Disordered" evidence="2">
    <location>
        <begin position="55"/>
        <end position="93"/>
    </location>
</feature>
<feature type="compositionally biased region" description="Basic and acidic residues" evidence="2">
    <location>
        <begin position="55"/>
        <end position="69"/>
    </location>
</feature>
<feature type="compositionally biased region" description="Basic residues" evidence="2">
    <location>
        <begin position="70"/>
        <end position="88"/>
    </location>
</feature>
<proteinExistence type="inferred from homology"/>
<comment type="function">
    <text evidence="1">Binds to the 23S rRNA.</text>
</comment>
<comment type="subunit">
    <text evidence="1">Part of the 50S ribosomal subunit.</text>
</comment>
<comment type="similarity">
    <text evidence="1">Belongs to the eukaryotic ribosomal protein eL19 family.</text>
</comment>